<comment type="function">
    <text evidence="1">May play an important role in stabilizing and/or regulating the cell membrane during Ca(2+) stress or certain stages of development.</text>
</comment>
<comment type="subcellular location">
    <subcellularLocation>
        <location>Cytoplasm</location>
    </subcellularLocation>
    <subcellularLocation>
        <location evidence="1">Membrane</location>
        <topology evidence="1">Peripheral membrane protein</topology>
    </subcellularLocation>
</comment>
<comment type="developmental stage">
    <text evidence="4">Expressed at high levels during aggregation and late development and at low levels during the slug stage.</text>
</comment>
<comment type="induction">
    <text evidence="4">Induced by high levels of extracellular Ca(2+).</text>
</comment>
<comment type="similarity">
    <text evidence="5">Belongs to the cup family.</text>
</comment>
<accession>Q7Z1I0</accession>
<accession>Q54GY4</accession>
<organism>
    <name type="scientific">Dictyostelium discoideum</name>
    <name type="common">Social amoeba</name>
    <dbReference type="NCBI Taxonomy" id="44689"/>
    <lineage>
        <taxon>Eukaryota</taxon>
        <taxon>Amoebozoa</taxon>
        <taxon>Evosea</taxon>
        <taxon>Eumycetozoa</taxon>
        <taxon>Dictyostelia</taxon>
        <taxon>Dictyosteliales</taxon>
        <taxon>Dictyosteliaceae</taxon>
        <taxon>Dictyostelium</taxon>
    </lineage>
</organism>
<reference key="1">
    <citation type="journal article" date="2004" name="Eukaryot. Cell">
        <title>The Ca2+/calcineurin-regulated cup gene family in Dictyostelium discoideum and its possible involvement in development.</title>
        <authorList>
            <person name="Coukell B."/>
            <person name="Li Y."/>
            <person name="Moniakis J."/>
            <person name="Cameron A."/>
        </authorList>
    </citation>
    <scope>NUCLEOTIDE SEQUENCE [GENOMIC DNA]</scope>
    <scope>DEVELOPMENTAL STAGE</scope>
    <scope>INDUCTION</scope>
</reference>
<reference key="2">
    <citation type="journal article" date="2005" name="Nature">
        <title>The genome of the social amoeba Dictyostelium discoideum.</title>
        <authorList>
            <person name="Eichinger L."/>
            <person name="Pachebat J.A."/>
            <person name="Gloeckner G."/>
            <person name="Rajandream M.A."/>
            <person name="Sucgang R."/>
            <person name="Berriman M."/>
            <person name="Song J."/>
            <person name="Olsen R."/>
            <person name="Szafranski K."/>
            <person name="Xu Q."/>
            <person name="Tunggal B."/>
            <person name="Kummerfeld S."/>
            <person name="Madera M."/>
            <person name="Konfortov B.A."/>
            <person name="Rivero F."/>
            <person name="Bankier A.T."/>
            <person name="Lehmann R."/>
            <person name="Hamlin N."/>
            <person name="Davies R."/>
            <person name="Gaudet P."/>
            <person name="Fey P."/>
            <person name="Pilcher K."/>
            <person name="Chen G."/>
            <person name="Saunders D."/>
            <person name="Sodergren E.J."/>
            <person name="Davis P."/>
            <person name="Kerhornou A."/>
            <person name="Nie X."/>
            <person name="Hall N."/>
            <person name="Anjard C."/>
            <person name="Hemphill L."/>
            <person name="Bason N."/>
            <person name="Farbrother P."/>
            <person name="Desany B."/>
            <person name="Just E."/>
            <person name="Morio T."/>
            <person name="Rost R."/>
            <person name="Churcher C.M."/>
            <person name="Cooper J."/>
            <person name="Haydock S."/>
            <person name="van Driessche N."/>
            <person name="Cronin A."/>
            <person name="Goodhead I."/>
            <person name="Muzny D.M."/>
            <person name="Mourier T."/>
            <person name="Pain A."/>
            <person name="Lu M."/>
            <person name="Harper D."/>
            <person name="Lindsay R."/>
            <person name="Hauser H."/>
            <person name="James K.D."/>
            <person name="Quiles M."/>
            <person name="Madan Babu M."/>
            <person name="Saito T."/>
            <person name="Buchrieser C."/>
            <person name="Wardroper A."/>
            <person name="Felder M."/>
            <person name="Thangavelu M."/>
            <person name="Johnson D."/>
            <person name="Knights A."/>
            <person name="Loulseged H."/>
            <person name="Mungall K.L."/>
            <person name="Oliver K."/>
            <person name="Price C."/>
            <person name="Quail M.A."/>
            <person name="Urushihara H."/>
            <person name="Hernandez J."/>
            <person name="Rabbinowitsch E."/>
            <person name="Steffen D."/>
            <person name="Sanders M."/>
            <person name="Ma J."/>
            <person name="Kohara Y."/>
            <person name="Sharp S."/>
            <person name="Simmonds M.N."/>
            <person name="Spiegler S."/>
            <person name="Tivey A."/>
            <person name="Sugano S."/>
            <person name="White B."/>
            <person name="Walker D."/>
            <person name="Woodward J.R."/>
            <person name="Winckler T."/>
            <person name="Tanaka Y."/>
            <person name="Shaulsky G."/>
            <person name="Schleicher M."/>
            <person name="Weinstock G.M."/>
            <person name="Rosenthal A."/>
            <person name="Cox E.C."/>
            <person name="Chisholm R.L."/>
            <person name="Gibbs R.A."/>
            <person name="Loomis W.F."/>
            <person name="Platzer M."/>
            <person name="Kay R.R."/>
            <person name="Williams J.G."/>
            <person name="Dear P.H."/>
            <person name="Noegel A.A."/>
            <person name="Barrell B.G."/>
            <person name="Kuspa A."/>
        </authorList>
    </citation>
    <scope>NUCLEOTIDE SEQUENCE [LARGE SCALE GENOMIC DNA]</scope>
    <source>
        <strain>AX4</strain>
    </source>
</reference>
<feature type="chain" id="PRO_0000327954" description="Calcium up-regulated protein F">
    <location>
        <begin position="1"/>
        <end position="769"/>
    </location>
</feature>
<feature type="domain" description="Ricin B-type lectin 1" evidence="2">
    <location>
        <begin position="25"/>
        <end position="145"/>
    </location>
</feature>
<feature type="domain" description="Ricin B-type lectin 2" evidence="2">
    <location>
        <begin position="116"/>
        <end position="249"/>
    </location>
</feature>
<feature type="region of interest" description="Disordered" evidence="3">
    <location>
        <begin position="1"/>
        <end position="21"/>
    </location>
</feature>
<feature type="sequence conflict" description="In Ref. 1; AAP40294." evidence="5" ref="1">
    <original>T</original>
    <variation>S</variation>
    <location>
        <position position="715"/>
    </location>
</feature>
<sequence>MINIKDISKSSNQSEEKSLKGTSSKTKYPFAAKSLFKGSNNITPYYLSTSNTFQCVASESIQTWLLSDDGHIFTSSGNFVLDVSSGGYFVELVQLNSNSKTQIWTIDTTNNKIQNQGNGKYLDIDNLKICVAPLNGNATQKWTTFRRAPIPTGNWGYFQSKQLDSNNNYWGLSVLNNSKSYNTSVVMNKVQAKSIGQIWQMTNDGHILSRLDGNLVLDIGPSINGSKTNYYLDTNVYKANDLKQQWGINENNQIFNQYYPNLCIGFVGELGVDSTVNCVLAQPSSASDINFQWITNPTYSLNEIVSEVPEPFPAYTSGDLLASYQYISNIATNGHTDDIRSLYTSINVSLEIFYVNVTNATCPSSIHSTEDFSNVQNQIKNELTYAITVRLVFENYSGFYSKLFSQGSTNLTNLANLINVDMSSDQVVNGDYTDAITSVFYAIISEIPIGGSIIANIGESAVEFGELYAESNDSGPSTYQVTLSKLYDHLNENYENEMTNAQSMKNTILQDWGMMSKTFALCFLPTKNPSSLNINGLDFQKISTIASLAYQTAMIQMLLPTNYQIYFTPAGYYAPVSSDDYSYTDSTGTYIMAEIDNCNSYPPKALTDKLWNNGVSKQEVFTSSYGWNLATSVTYYNMVDKYSGMFKLSFPTVKNFTSVPMQFVMTNGSDRVGTFNVKTHFAGLASTYYYSGALGHHYYDIAVTDIDGNKVANFTVDNNLEALEGSYVSIKTGSLVVQPGYVVGNPTCNQGSFSQGFAASILIPIYKSN</sequence>
<proteinExistence type="evidence at transcript level"/>
<name>CUPF_DICDI</name>
<gene>
    <name type="primary">cupF</name>
    <name type="ORF">DDB_G0289813</name>
</gene>
<protein>
    <recommendedName>
        <fullName>Calcium up-regulated protein F</fullName>
    </recommendedName>
</protein>
<keyword id="KW-0963">Cytoplasm</keyword>
<keyword id="KW-0430">Lectin</keyword>
<keyword id="KW-0472">Membrane</keyword>
<keyword id="KW-1185">Reference proteome</keyword>
<keyword id="KW-0677">Repeat</keyword>
<dbReference type="EMBL" id="AY282572">
    <property type="protein sequence ID" value="AAP40294.1"/>
    <property type="molecule type" value="Genomic_DNA"/>
</dbReference>
<dbReference type="EMBL" id="AAFI02000149">
    <property type="protein sequence ID" value="EAL62507.1"/>
    <property type="molecule type" value="Genomic_DNA"/>
</dbReference>
<dbReference type="RefSeq" id="XP_636023.1">
    <property type="nucleotide sequence ID" value="XM_630931.1"/>
</dbReference>
<dbReference type="FunCoup" id="Q7Z1I0">
    <property type="interactions" value="203"/>
</dbReference>
<dbReference type="STRING" id="44689.Q7Z1I0"/>
<dbReference type="CAZy" id="CBM13">
    <property type="family name" value="Carbohydrate-Binding Module Family 13"/>
</dbReference>
<dbReference type="PaxDb" id="44689-DDB0191378"/>
<dbReference type="EnsemblProtists" id="EAL62507">
    <property type="protein sequence ID" value="EAL62507"/>
    <property type="gene ID" value="DDB_G0289813"/>
</dbReference>
<dbReference type="GeneID" id="8627349"/>
<dbReference type="KEGG" id="ddi:DDB_G0289813"/>
<dbReference type="dictyBase" id="DDB_G0289813">
    <property type="gene designation" value="cupF"/>
</dbReference>
<dbReference type="VEuPathDB" id="AmoebaDB:DDB_G0289813"/>
<dbReference type="HOGENOM" id="CLU_020711_0_0_1"/>
<dbReference type="InParanoid" id="Q7Z1I0"/>
<dbReference type="PhylomeDB" id="Q7Z1I0"/>
<dbReference type="PRO" id="PR:Q7Z1I0"/>
<dbReference type="Proteomes" id="UP000002195">
    <property type="component" value="Chromosome 5"/>
</dbReference>
<dbReference type="GO" id="GO:0005737">
    <property type="term" value="C:cytoplasm"/>
    <property type="evidence" value="ECO:0000314"/>
    <property type="project" value="dictyBase"/>
</dbReference>
<dbReference type="GO" id="GO:0016020">
    <property type="term" value="C:membrane"/>
    <property type="evidence" value="ECO:0007669"/>
    <property type="project" value="UniProtKB-SubCell"/>
</dbReference>
<dbReference type="GO" id="GO:0005634">
    <property type="term" value="C:nucleus"/>
    <property type="evidence" value="ECO:0000314"/>
    <property type="project" value="dictyBase"/>
</dbReference>
<dbReference type="GO" id="GO:0030246">
    <property type="term" value="F:carbohydrate binding"/>
    <property type="evidence" value="ECO:0007669"/>
    <property type="project" value="UniProtKB-KW"/>
</dbReference>
<dbReference type="GO" id="GO:0043157">
    <property type="term" value="P:response to cation stress"/>
    <property type="evidence" value="ECO:0000314"/>
    <property type="project" value="dictyBase"/>
</dbReference>
<dbReference type="FunFam" id="2.80.10.50:FF:000086">
    <property type="entry name" value="Calcium up-regulated protein A"/>
    <property type="match status" value="1"/>
</dbReference>
<dbReference type="FunFam" id="2.80.10.50:FF:000098">
    <property type="entry name" value="Calcium up-regulated protein A"/>
    <property type="match status" value="1"/>
</dbReference>
<dbReference type="Gene3D" id="2.80.10.50">
    <property type="match status" value="2"/>
</dbReference>
<dbReference type="InterPro" id="IPR051780">
    <property type="entry name" value="Ca_Up-reg_Membrane_Reg"/>
</dbReference>
<dbReference type="InterPro" id="IPR035992">
    <property type="entry name" value="Ricin_B-like_lectins"/>
</dbReference>
<dbReference type="InterPro" id="IPR000772">
    <property type="entry name" value="Ricin_B_lectin"/>
</dbReference>
<dbReference type="PANTHER" id="PTHR31599">
    <property type="entry name" value="CALCIUM UP-REGULATED PROTEIN A-RELATED"/>
    <property type="match status" value="1"/>
</dbReference>
<dbReference type="PANTHER" id="PTHR31599:SF2">
    <property type="entry name" value="CALCIUM UP-REGULATED PROTEIN A-RELATED"/>
    <property type="match status" value="1"/>
</dbReference>
<dbReference type="Pfam" id="PF00652">
    <property type="entry name" value="Ricin_B_lectin"/>
    <property type="match status" value="1"/>
</dbReference>
<dbReference type="SMART" id="SM00458">
    <property type="entry name" value="RICIN"/>
    <property type="match status" value="1"/>
</dbReference>
<dbReference type="SUPFAM" id="SSF50370">
    <property type="entry name" value="Ricin B-like lectins"/>
    <property type="match status" value="2"/>
</dbReference>
<dbReference type="PROSITE" id="PS50231">
    <property type="entry name" value="RICIN_B_LECTIN"/>
    <property type="match status" value="2"/>
</dbReference>
<evidence type="ECO:0000250" key="1"/>
<evidence type="ECO:0000255" key="2">
    <source>
        <dbReference type="PROSITE-ProRule" id="PRU00174"/>
    </source>
</evidence>
<evidence type="ECO:0000256" key="3">
    <source>
        <dbReference type="SAM" id="MobiDB-lite"/>
    </source>
</evidence>
<evidence type="ECO:0000269" key="4">
    <source>
    </source>
</evidence>
<evidence type="ECO:0000305" key="5"/>